<proteinExistence type="evidence at protein level"/>
<evidence type="ECO:0000255" key="1">
    <source>
        <dbReference type="HAMAP-Rule" id="MF_00823"/>
    </source>
</evidence>
<evidence type="ECO:0000255" key="2">
    <source>
        <dbReference type="PROSITE-ProRule" id="PRU01137"/>
    </source>
</evidence>
<evidence type="ECO:0007829" key="3">
    <source>
        <dbReference type="PDB" id="5KDR"/>
    </source>
</evidence>
<dbReference type="EC" id="2.1.3.15" evidence="1"/>
<dbReference type="EMBL" id="CP000253">
    <property type="protein sequence ID" value="ABD30876.1"/>
    <property type="molecule type" value="Genomic_DNA"/>
</dbReference>
<dbReference type="RefSeq" id="WP_000883645.1">
    <property type="nucleotide sequence ID" value="NZ_LS483365.1"/>
</dbReference>
<dbReference type="RefSeq" id="YP_500313.1">
    <property type="nucleotide sequence ID" value="NC_007795.1"/>
</dbReference>
<dbReference type="PDB" id="5KDR">
    <property type="method" value="X-ray"/>
    <property type="resolution" value="2.60 A"/>
    <property type="chains" value="A=1-314"/>
</dbReference>
<dbReference type="PDBsum" id="5KDR"/>
<dbReference type="SMR" id="Q2FXM7"/>
<dbReference type="STRING" id="93061.SAOUHSC_01808"/>
<dbReference type="PaxDb" id="1280-SAXN108_1728"/>
<dbReference type="GeneID" id="3919278"/>
<dbReference type="KEGG" id="sao:SAOUHSC_01808"/>
<dbReference type="PATRIC" id="fig|93061.5.peg.1648"/>
<dbReference type="eggNOG" id="COG0825">
    <property type="taxonomic scope" value="Bacteria"/>
</dbReference>
<dbReference type="HOGENOM" id="CLU_015486_0_2_9"/>
<dbReference type="OrthoDB" id="9808023at2"/>
<dbReference type="UniPathway" id="UPA00655">
    <property type="reaction ID" value="UER00711"/>
</dbReference>
<dbReference type="PRO" id="PR:Q2FXM7"/>
<dbReference type="Proteomes" id="UP000008816">
    <property type="component" value="Chromosome"/>
</dbReference>
<dbReference type="GO" id="GO:0009317">
    <property type="term" value="C:acetyl-CoA carboxylase complex"/>
    <property type="evidence" value="ECO:0007669"/>
    <property type="project" value="InterPro"/>
</dbReference>
<dbReference type="GO" id="GO:0003989">
    <property type="term" value="F:acetyl-CoA carboxylase activity"/>
    <property type="evidence" value="ECO:0007669"/>
    <property type="project" value="InterPro"/>
</dbReference>
<dbReference type="GO" id="GO:0005524">
    <property type="term" value="F:ATP binding"/>
    <property type="evidence" value="ECO:0007669"/>
    <property type="project" value="UniProtKB-KW"/>
</dbReference>
<dbReference type="GO" id="GO:0016743">
    <property type="term" value="F:carboxyl- or carbamoyltransferase activity"/>
    <property type="evidence" value="ECO:0007669"/>
    <property type="project" value="UniProtKB-UniRule"/>
</dbReference>
<dbReference type="GO" id="GO:0006633">
    <property type="term" value="P:fatty acid biosynthetic process"/>
    <property type="evidence" value="ECO:0007669"/>
    <property type="project" value="UniProtKB-KW"/>
</dbReference>
<dbReference type="GO" id="GO:2001295">
    <property type="term" value="P:malonyl-CoA biosynthetic process"/>
    <property type="evidence" value="ECO:0007669"/>
    <property type="project" value="UniProtKB-UniRule"/>
</dbReference>
<dbReference type="Gene3D" id="3.90.226.10">
    <property type="entry name" value="2-enoyl-CoA Hydratase, Chain A, domain 1"/>
    <property type="match status" value="1"/>
</dbReference>
<dbReference type="HAMAP" id="MF_00823">
    <property type="entry name" value="AcetylCoA_CT_alpha"/>
    <property type="match status" value="1"/>
</dbReference>
<dbReference type="InterPro" id="IPR001095">
    <property type="entry name" value="Acetyl_CoA_COase_a_su"/>
</dbReference>
<dbReference type="InterPro" id="IPR029045">
    <property type="entry name" value="ClpP/crotonase-like_dom_sf"/>
</dbReference>
<dbReference type="InterPro" id="IPR011763">
    <property type="entry name" value="COA_CT_C"/>
</dbReference>
<dbReference type="NCBIfam" id="TIGR00513">
    <property type="entry name" value="accA"/>
    <property type="match status" value="1"/>
</dbReference>
<dbReference type="NCBIfam" id="NF041504">
    <property type="entry name" value="AccA_sub"/>
    <property type="match status" value="1"/>
</dbReference>
<dbReference type="NCBIfam" id="NF004344">
    <property type="entry name" value="PRK05724.1"/>
    <property type="match status" value="1"/>
</dbReference>
<dbReference type="PANTHER" id="PTHR42853">
    <property type="entry name" value="ACETYL-COENZYME A CARBOXYLASE CARBOXYL TRANSFERASE SUBUNIT ALPHA"/>
    <property type="match status" value="1"/>
</dbReference>
<dbReference type="PANTHER" id="PTHR42853:SF3">
    <property type="entry name" value="ACETYL-COENZYME A CARBOXYLASE CARBOXYL TRANSFERASE SUBUNIT ALPHA, CHLOROPLASTIC"/>
    <property type="match status" value="1"/>
</dbReference>
<dbReference type="Pfam" id="PF03255">
    <property type="entry name" value="ACCA"/>
    <property type="match status" value="1"/>
</dbReference>
<dbReference type="PRINTS" id="PR01069">
    <property type="entry name" value="ACCCTRFRASEA"/>
</dbReference>
<dbReference type="SUPFAM" id="SSF52096">
    <property type="entry name" value="ClpP/crotonase"/>
    <property type="match status" value="1"/>
</dbReference>
<dbReference type="PROSITE" id="PS50989">
    <property type="entry name" value="COA_CT_CTER"/>
    <property type="match status" value="1"/>
</dbReference>
<reference key="1">
    <citation type="book" date="2006" name="Gram positive pathogens, 2nd edition">
        <title>The Staphylococcus aureus NCTC 8325 genome.</title>
        <editorList>
            <person name="Fischetti V."/>
            <person name="Novick R."/>
            <person name="Ferretti J."/>
            <person name="Portnoy D."/>
            <person name="Rood J."/>
        </editorList>
        <authorList>
            <person name="Gillaspy A.F."/>
            <person name="Worrell V."/>
            <person name="Orvis J."/>
            <person name="Roe B.A."/>
            <person name="Dyer D.W."/>
            <person name="Iandolo J.J."/>
        </authorList>
    </citation>
    <scope>NUCLEOTIDE SEQUENCE [LARGE SCALE GENOMIC DNA]</scope>
    <source>
        <strain>NCTC 8325 / PS 47</strain>
    </source>
</reference>
<sequence>MLDFEKPLFEIRNKIESLKESQDKNDVDLQEEIDMLEASLERETKKIYTNLKPWDRVQIARLQERPTTLDYIPYIFDSFMELHGDRNFRDDPAMIGGIGFLNGRAVTVIGQQRGKDTKDNIYRNFGMAHPEGYRKALRLMKQAEKFNRPIFTFIDTKGAYPGKAAEERGQSESIATNLIEMASLKVPVIAIVIGEGGSGGALGIGIANKVLMLENSTYSVISPEGAAALLWKDSNLAKIAAETMKITAHDIKQLGIIDDVISEPLGGAHKDIEQQALAIKSAFVAQLDSLESLSRDEIANDRFEKFRNIGSYIE</sequence>
<protein>
    <recommendedName>
        <fullName evidence="1">Acetyl-coenzyme A carboxylase carboxyl transferase subunit alpha</fullName>
        <shortName evidence="1">ACCase subunit alpha</shortName>
        <shortName evidence="1">Acetyl-CoA carboxylase carboxyltransferase subunit alpha</shortName>
        <ecNumber evidence="1">2.1.3.15</ecNumber>
    </recommendedName>
</protein>
<organism>
    <name type="scientific">Staphylococcus aureus (strain NCTC 8325 / PS 47)</name>
    <dbReference type="NCBI Taxonomy" id="93061"/>
    <lineage>
        <taxon>Bacteria</taxon>
        <taxon>Bacillati</taxon>
        <taxon>Bacillota</taxon>
        <taxon>Bacilli</taxon>
        <taxon>Bacillales</taxon>
        <taxon>Staphylococcaceae</taxon>
        <taxon>Staphylococcus</taxon>
    </lineage>
</organism>
<name>ACCA_STAA8</name>
<feature type="chain" id="PRO_1000062679" description="Acetyl-coenzyme A carboxylase carboxyl transferase subunit alpha">
    <location>
        <begin position="1"/>
        <end position="314"/>
    </location>
</feature>
<feature type="domain" description="CoA carboxyltransferase C-terminal" evidence="2">
    <location>
        <begin position="32"/>
        <end position="289"/>
    </location>
</feature>
<feature type="helix" evidence="3">
    <location>
        <begin position="6"/>
        <end position="15"/>
    </location>
</feature>
<feature type="helix" evidence="3">
    <location>
        <begin position="32"/>
        <end position="49"/>
    </location>
</feature>
<feature type="helix" evidence="3">
    <location>
        <begin position="53"/>
        <end position="60"/>
    </location>
</feature>
<feature type="helix" evidence="3">
    <location>
        <begin position="68"/>
        <end position="75"/>
    </location>
</feature>
<feature type="strand" evidence="3">
    <location>
        <begin position="76"/>
        <end position="81"/>
    </location>
</feature>
<feature type="strand" evidence="3">
    <location>
        <begin position="86"/>
        <end position="88"/>
    </location>
</feature>
<feature type="strand" evidence="3">
    <location>
        <begin position="94"/>
        <end position="101"/>
    </location>
</feature>
<feature type="strand" evidence="3">
    <location>
        <begin position="104"/>
        <end position="111"/>
    </location>
</feature>
<feature type="helix" evidence="3">
    <location>
        <begin position="117"/>
        <end position="123"/>
    </location>
</feature>
<feature type="helix" evidence="3">
    <location>
        <begin position="124"/>
        <end position="126"/>
    </location>
</feature>
<feature type="helix" evidence="3">
    <location>
        <begin position="130"/>
        <end position="146"/>
    </location>
</feature>
<feature type="strand" evidence="3">
    <location>
        <begin position="150"/>
        <end position="159"/>
    </location>
</feature>
<feature type="helix" evidence="3">
    <location>
        <begin position="163"/>
        <end position="167"/>
    </location>
</feature>
<feature type="helix" evidence="3">
    <location>
        <begin position="170"/>
        <end position="182"/>
    </location>
</feature>
<feature type="strand" evidence="3">
    <location>
        <begin position="188"/>
        <end position="197"/>
    </location>
</feature>
<feature type="helix" evidence="3">
    <location>
        <begin position="198"/>
        <end position="202"/>
    </location>
</feature>
<feature type="strand" evidence="3">
    <location>
        <begin position="208"/>
        <end position="213"/>
    </location>
</feature>
<feature type="strand" evidence="3">
    <location>
        <begin position="219"/>
        <end position="221"/>
    </location>
</feature>
<feature type="helix" evidence="3">
    <location>
        <begin position="223"/>
        <end position="229"/>
    </location>
</feature>
<feature type="helix" evidence="3">
    <location>
        <begin position="237"/>
        <end position="244"/>
    </location>
</feature>
<feature type="helix" evidence="3">
    <location>
        <begin position="248"/>
        <end position="253"/>
    </location>
</feature>
<feature type="strand" evidence="3">
    <location>
        <begin position="256"/>
        <end position="261"/>
    </location>
</feature>
<feature type="helix" evidence="3">
    <location>
        <begin position="268"/>
        <end position="270"/>
    </location>
</feature>
<feature type="helix" evidence="3">
    <location>
        <begin position="272"/>
        <end position="289"/>
    </location>
</feature>
<feature type="helix" evidence="3">
    <location>
        <begin position="295"/>
        <end position="307"/>
    </location>
</feature>
<keyword id="KW-0002">3D-structure</keyword>
<keyword id="KW-0067">ATP-binding</keyword>
<keyword id="KW-0963">Cytoplasm</keyword>
<keyword id="KW-0275">Fatty acid biosynthesis</keyword>
<keyword id="KW-0276">Fatty acid metabolism</keyword>
<keyword id="KW-0444">Lipid biosynthesis</keyword>
<keyword id="KW-0443">Lipid metabolism</keyword>
<keyword id="KW-0547">Nucleotide-binding</keyword>
<keyword id="KW-1185">Reference proteome</keyword>
<keyword id="KW-0808">Transferase</keyword>
<gene>
    <name evidence="1" type="primary">accA</name>
    <name type="ordered locus">SAOUHSC_01808</name>
</gene>
<accession>Q2FXM7</accession>
<comment type="function">
    <text evidence="1">Component of the acetyl coenzyme A carboxylase (ACC) complex. First, biotin carboxylase catalyzes the carboxylation of biotin on its carrier protein (BCCP) and then the CO(2) group is transferred by the carboxyltransferase to acetyl-CoA to form malonyl-CoA.</text>
</comment>
<comment type="catalytic activity">
    <reaction evidence="1">
        <text>N(6)-carboxybiotinyl-L-lysyl-[protein] + acetyl-CoA = N(6)-biotinyl-L-lysyl-[protein] + malonyl-CoA</text>
        <dbReference type="Rhea" id="RHEA:54728"/>
        <dbReference type="Rhea" id="RHEA-COMP:10505"/>
        <dbReference type="Rhea" id="RHEA-COMP:10506"/>
        <dbReference type="ChEBI" id="CHEBI:57288"/>
        <dbReference type="ChEBI" id="CHEBI:57384"/>
        <dbReference type="ChEBI" id="CHEBI:83144"/>
        <dbReference type="ChEBI" id="CHEBI:83145"/>
        <dbReference type="EC" id="2.1.3.15"/>
    </reaction>
</comment>
<comment type="pathway">
    <text evidence="1">Lipid metabolism; malonyl-CoA biosynthesis; malonyl-CoA from acetyl-CoA: step 1/1.</text>
</comment>
<comment type="subunit">
    <text evidence="1">Acetyl-CoA carboxylase is a heterohexamer composed of biotin carboxyl carrier protein (AccB), biotin carboxylase (AccC) and two subunits each of ACCase subunit alpha (AccA) and ACCase subunit beta (AccD).</text>
</comment>
<comment type="subcellular location">
    <subcellularLocation>
        <location evidence="1">Cytoplasm</location>
    </subcellularLocation>
</comment>
<comment type="similarity">
    <text evidence="1">Belongs to the AccA family.</text>
</comment>